<gene>
    <name evidence="1" type="primary">PHR3</name>
    <name evidence="4" type="ORF">OsI_05784</name>
</gene>
<feature type="chain" id="PRO_0000436719" description="Protein PHOSPHATE STARVATION RESPONSE 3">
    <location>
        <begin position="1"/>
        <end position="467"/>
    </location>
</feature>
<feature type="domain" description="HTH myb-type" evidence="2">
    <location>
        <begin position="262"/>
        <end position="322"/>
    </location>
</feature>
<feature type="DNA-binding region" description="H-T-H motif" evidence="2">
    <location>
        <begin position="293"/>
        <end position="318"/>
    </location>
</feature>
<feature type="region of interest" description="Disordered" evidence="3">
    <location>
        <begin position="227"/>
        <end position="266"/>
    </location>
</feature>
<feature type="region of interest" description="Disordered" evidence="3">
    <location>
        <begin position="327"/>
        <end position="353"/>
    </location>
</feature>
<feature type="region of interest" description="Disordered" evidence="3">
    <location>
        <begin position="400"/>
        <end position="467"/>
    </location>
</feature>
<feature type="compositionally biased region" description="Basic and acidic residues" evidence="3">
    <location>
        <begin position="327"/>
        <end position="337"/>
    </location>
</feature>
<feature type="compositionally biased region" description="Polar residues" evidence="3">
    <location>
        <begin position="402"/>
        <end position="412"/>
    </location>
</feature>
<feature type="compositionally biased region" description="Basic and acidic residues" evidence="3">
    <location>
        <begin position="419"/>
        <end position="428"/>
    </location>
</feature>
<feature type="compositionally biased region" description="Basic and acidic residues" evidence="3">
    <location>
        <begin position="438"/>
        <end position="467"/>
    </location>
</feature>
<comment type="function">
    <text evidence="1">Transcription factor involved in phosphate starvation signaling. Binds to P1BS, an imperfect palindromic sequence 5'-GNATATNC-3', to promote the expression of inorganic phosphate (Pi) starvation-responsive genes. Functionally redundant with PHR1 and PHR2 in regulating Pi starvation response and Pi homeostasis.</text>
</comment>
<comment type="subcellular location">
    <subcellularLocation>
        <location evidence="2">Nucleus</location>
    </subcellularLocation>
</comment>
<protein>
    <recommendedName>
        <fullName evidence="1">Protein PHOSPHATE STARVATION RESPONSE 3</fullName>
        <shortName evidence="1">OsPHR3</shortName>
    </recommendedName>
</protein>
<evidence type="ECO:0000250" key="1">
    <source>
        <dbReference type="UniProtKB" id="Q6YXZ4"/>
    </source>
</evidence>
<evidence type="ECO:0000255" key="2">
    <source>
        <dbReference type="PROSITE-ProRule" id="PRU00625"/>
    </source>
</evidence>
<evidence type="ECO:0000256" key="3">
    <source>
        <dbReference type="SAM" id="MobiDB-lite"/>
    </source>
</evidence>
<evidence type="ECO:0000312" key="4">
    <source>
        <dbReference type="EMBL" id="EAY84410.1"/>
    </source>
</evidence>
<evidence type="ECO:0000312" key="5">
    <source>
        <dbReference type="Proteomes" id="UP000007015"/>
    </source>
</evidence>
<name>PHR3_ORYSI</name>
<accession>A2X0Q0</accession>
<keyword id="KW-0238">DNA-binding</keyword>
<keyword id="KW-0539">Nucleus</keyword>
<keyword id="KW-1185">Reference proteome</keyword>
<keyword id="KW-0804">Transcription</keyword>
<keyword id="KW-0805">Transcription regulation</keyword>
<dbReference type="EMBL" id="CM000127">
    <property type="protein sequence ID" value="EAY84410.1"/>
    <property type="molecule type" value="Genomic_DNA"/>
</dbReference>
<dbReference type="SMR" id="A2X0Q0"/>
<dbReference type="STRING" id="39946.A2X0Q0"/>
<dbReference type="EnsemblPlants" id="BGIOSGA007162-TA">
    <property type="protein sequence ID" value="BGIOSGA007162-PA"/>
    <property type="gene ID" value="BGIOSGA007162"/>
</dbReference>
<dbReference type="EnsemblPlants" id="OsGoSa_02g0003050.01">
    <property type="protein sequence ID" value="OsGoSa_02g0003050.01"/>
    <property type="gene ID" value="OsGoSa_02g0003050"/>
</dbReference>
<dbReference type="EnsemblPlants" id="OsIR64_02g0002980.01">
    <property type="protein sequence ID" value="OsIR64_02g0002980.01"/>
    <property type="gene ID" value="OsIR64_02g0002980"/>
</dbReference>
<dbReference type="EnsemblPlants" id="OsLima_02g0003050.01">
    <property type="protein sequence ID" value="OsLima_02g0003050.01"/>
    <property type="gene ID" value="OsLima_02g0003050"/>
</dbReference>
<dbReference type="EnsemblPlants" id="OsLiXu_02g0003140.01">
    <property type="protein sequence ID" value="OsLiXu_02g0003140.01"/>
    <property type="gene ID" value="OsLiXu_02g0003140"/>
</dbReference>
<dbReference type="EnsemblPlants" id="OsMH63_02G003110_01">
    <property type="protein sequence ID" value="OsMH63_02G003110_01"/>
    <property type="gene ID" value="OsMH63_02G003110"/>
</dbReference>
<dbReference type="EnsemblPlants" id="OsPr106_02g0003070.02">
    <property type="protein sequence ID" value="OsPr106_02g0003070.02"/>
    <property type="gene ID" value="OsPr106_02g0003070"/>
</dbReference>
<dbReference type="EnsemblPlants" id="OsZS97_02G002940_01">
    <property type="protein sequence ID" value="OsZS97_02G002940_01"/>
    <property type="gene ID" value="OsZS97_02G002940"/>
</dbReference>
<dbReference type="EnsemblPlants" id="OsZS97_02G002990_01">
    <property type="protein sequence ID" value="OsZS97_02G002990_01"/>
    <property type="gene ID" value="OsZS97_02G002990"/>
</dbReference>
<dbReference type="Gramene" id="BGIOSGA007162-TA">
    <property type="protein sequence ID" value="BGIOSGA007162-PA"/>
    <property type="gene ID" value="BGIOSGA007162"/>
</dbReference>
<dbReference type="Gramene" id="OsGoSa_02g0003050.01">
    <property type="protein sequence ID" value="OsGoSa_02g0003050.01"/>
    <property type="gene ID" value="OsGoSa_02g0003050"/>
</dbReference>
<dbReference type="Gramene" id="OsIR64_02g0002980.01">
    <property type="protein sequence ID" value="OsIR64_02g0002980.01"/>
    <property type="gene ID" value="OsIR64_02g0002980"/>
</dbReference>
<dbReference type="Gramene" id="OsLima_02g0003050.01">
    <property type="protein sequence ID" value="OsLima_02g0003050.01"/>
    <property type="gene ID" value="OsLima_02g0003050"/>
</dbReference>
<dbReference type="Gramene" id="OsLiXu_02g0003140.01">
    <property type="protein sequence ID" value="OsLiXu_02g0003140.01"/>
    <property type="gene ID" value="OsLiXu_02g0003140"/>
</dbReference>
<dbReference type="Gramene" id="OsMH63_02G003110_01">
    <property type="protein sequence ID" value="OsMH63_02G003110_01"/>
    <property type="gene ID" value="OsMH63_02G003110"/>
</dbReference>
<dbReference type="Gramene" id="OsPr106_02g0003070.02">
    <property type="protein sequence ID" value="OsPr106_02g0003070.02"/>
    <property type="gene ID" value="OsPr106_02g0003070"/>
</dbReference>
<dbReference type="Gramene" id="OsZS97_02G002940_01">
    <property type="protein sequence ID" value="OsZS97_02G002940_01"/>
    <property type="gene ID" value="OsZS97_02G002940"/>
</dbReference>
<dbReference type="Gramene" id="OsZS97_02G002990_01">
    <property type="protein sequence ID" value="OsZS97_02G002990_01"/>
    <property type="gene ID" value="OsZS97_02G002990"/>
</dbReference>
<dbReference type="HOGENOM" id="CLU_045049_1_0_1"/>
<dbReference type="OMA" id="KMAHTCT"/>
<dbReference type="OrthoDB" id="551907at2759"/>
<dbReference type="Proteomes" id="UP000007015">
    <property type="component" value="Chromosome 2"/>
</dbReference>
<dbReference type="GO" id="GO:0005634">
    <property type="term" value="C:nucleus"/>
    <property type="evidence" value="ECO:0007669"/>
    <property type="project" value="UniProtKB-SubCell"/>
</dbReference>
<dbReference type="GO" id="GO:0003677">
    <property type="term" value="F:DNA binding"/>
    <property type="evidence" value="ECO:0007669"/>
    <property type="project" value="UniProtKB-KW"/>
</dbReference>
<dbReference type="GO" id="GO:0003700">
    <property type="term" value="F:DNA-binding transcription factor activity"/>
    <property type="evidence" value="ECO:0007669"/>
    <property type="project" value="InterPro"/>
</dbReference>
<dbReference type="FunFam" id="1.10.10.60:FF:000002">
    <property type="entry name" value="Myb family transcription factor"/>
    <property type="match status" value="1"/>
</dbReference>
<dbReference type="Gene3D" id="1.10.10.60">
    <property type="entry name" value="Homeodomain-like"/>
    <property type="match status" value="1"/>
</dbReference>
<dbReference type="InterPro" id="IPR009057">
    <property type="entry name" value="Homeodomain-like_sf"/>
</dbReference>
<dbReference type="InterPro" id="IPR025756">
    <property type="entry name" value="Myb_CC_LHEQLE"/>
</dbReference>
<dbReference type="InterPro" id="IPR017930">
    <property type="entry name" value="Myb_dom"/>
</dbReference>
<dbReference type="InterPro" id="IPR006447">
    <property type="entry name" value="Myb_dom_plants"/>
</dbReference>
<dbReference type="InterPro" id="IPR046955">
    <property type="entry name" value="PHR1-like"/>
</dbReference>
<dbReference type="InterPro" id="IPR001005">
    <property type="entry name" value="SANT/Myb"/>
</dbReference>
<dbReference type="NCBIfam" id="TIGR01557">
    <property type="entry name" value="myb_SHAQKYF"/>
    <property type="match status" value="1"/>
</dbReference>
<dbReference type="PANTHER" id="PTHR31499:SF79">
    <property type="entry name" value="HTH MYB-TYPE DOMAIN-CONTAINING PROTEIN"/>
    <property type="match status" value="1"/>
</dbReference>
<dbReference type="PANTHER" id="PTHR31499">
    <property type="entry name" value="MYB FAMILY TRANSCRIPTION FACTOR PHL11"/>
    <property type="match status" value="1"/>
</dbReference>
<dbReference type="Pfam" id="PF14379">
    <property type="entry name" value="Myb_CC_LHEQLE"/>
    <property type="match status" value="1"/>
</dbReference>
<dbReference type="Pfam" id="PF00249">
    <property type="entry name" value="Myb_DNA-binding"/>
    <property type="match status" value="1"/>
</dbReference>
<dbReference type="SUPFAM" id="SSF46689">
    <property type="entry name" value="Homeodomain-like"/>
    <property type="match status" value="1"/>
</dbReference>
<dbReference type="PROSITE" id="PS51294">
    <property type="entry name" value="HTH_MYB"/>
    <property type="match status" value="1"/>
</dbReference>
<proteinExistence type="inferred from homology"/>
<reference key="1">
    <citation type="journal article" date="2005" name="PLoS Biol.">
        <title>The genomes of Oryza sativa: a history of duplications.</title>
        <authorList>
            <person name="Yu J."/>
            <person name="Wang J."/>
            <person name="Lin W."/>
            <person name="Li S."/>
            <person name="Li H."/>
            <person name="Zhou J."/>
            <person name="Ni P."/>
            <person name="Dong W."/>
            <person name="Hu S."/>
            <person name="Zeng C."/>
            <person name="Zhang J."/>
            <person name="Zhang Y."/>
            <person name="Li R."/>
            <person name="Xu Z."/>
            <person name="Li S."/>
            <person name="Li X."/>
            <person name="Zheng H."/>
            <person name="Cong L."/>
            <person name="Lin L."/>
            <person name="Yin J."/>
            <person name="Geng J."/>
            <person name="Li G."/>
            <person name="Shi J."/>
            <person name="Liu J."/>
            <person name="Lv H."/>
            <person name="Li J."/>
            <person name="Wang J."/>
            <person name="Deng Y."/>
            <person name="Ran L."/>
            <person name="Shi X."/>
            <person name="Wang X."/>
            <person name="Wu Q."/>
            <person name="Li C."/>
            <person name="Ren X."/>
            <person name="Wang J."/>
            <person name="Wang X."/>
            <person name="Li D."/>
            <person name="Liu D."/>
            <person name="Zhang X."/>
            <person name="Ji Z."/>
            <person name="Zhao W."/>
            <person name="Sun Y."/>
            <person name="Zhang Z."/>
            <person name="Bao J."/>
            <person name="Han Y."/>
            <person name="Dong L."/>
            <person name="Ji J."/>
            <person name="Chen P."/>
            <person name="Wu S."/>
            <person name="Liu J."/>
            <person name="Xiao Y."/>
            <person name="Bu D."/>
            <person name="Tan J."/>
            <person name="Yang L."/>
            <person name="Ye C."/>
            <person name="Zhang J."/>
            <person name="Xu J."/>
            <person name="Zhou Y."/>
            <person name="Yu Y."/>
            <person name="Zhang B."/>
            <person name="Zhuang S."/>
            <person name="Wei H."/>
            <person name="Liu B."/>
            <person name="Lei M."/>
            <person name="Yu H."/>
            <person name="Li Y."/>
            <person name="Xu H."/>
            <person name="Wei S."/>
            <person name="He X."/>
            <person name="Fang L."/>
            <person name="Zhang Z."/>
            <person name="Zhang Y."/>
            <person name="Huang X."/>
            <person name="Su Z."/>
            <person name="Tong W."/>
            <person name="Li J."/>
            <person name="Tong Z."/>
            <person name="Li S."/>
            <person name="Ye J."/>
            <person name="Wang L."/>
            <person name="Fang L."/>
            <person name="Lei T."/>
            <person name="Chen C.-S."/>
            <person name="Chen H.-C."/>
            <person name="Xu Z."/>
            <person name="Li H."/>
            <person name="Huang H."/>
            <person name="Zhang F."/>
            <person name="Xu H."/>
            <person name="Li N."/>
            <person name="Zhao C."/>
            <person name="Li S."/>
            <person name="Dong L."/>
            <person name="Huang Y."/>
            <person name="Li L."/>
            <person name="Xi Y."/>
            <person name="Qi Q."/>
            <person name="Li W."/>
            <person name="Zhang B."/>
            <person name="Hu W."/>
            <person name="Zhang Y."/>
            <person name="Tian X."/>
            <person name="Jiao Y."/>
            <person name="Liang X."/>
            <person name="Jin J."/>
            <person name="Gao L."/>
            <person name="Zheng W."/>
            <person name="Hao B."/>
            <person name="Liu S.-M."/>
            <person name="Wang W."/>
            <person name="Yuan L."/>
            <person name="Cao M."/>
            <person name="McDermott J."/>
            <person name="Samudrala R."/>
            <person name="Wang J."/>
            <person name="Wong G.K.-S."/>
            <person name="Yang H."/>
        </authorList>
    </citation>
    <scope>NUCLEOTIDE SEQUENCE [LARGE SCALE GENOMIC DNA]</scope>
    <source>
        <strain>cv. 93-11</strain>
    </source>
</reference>
<sequence length="467" mass="51903">MSTQSVIAVKQFSGPDKIAQAYTVPQPSAHVLSNANYDYDLCGSTNSTSLSCAIQSSNIKTESISSSSLPKILPFSTDSNGESSLSRMSQAEFSDPILSSSSTFCTSLYTSSPMNSGSCRKTGYLPFLPQPPKCEQQQNSVGQSSSSLMLLDADLRNSGHADDEHTDDLKDFLNLSSDCSFHGKCSAMAYNEQMEFQFLSEQLGIAISNNEESPRLDDIYDRPPQLMSLPVSSCSDQEDLQDARSPAKVQLSSSRSSSGTASCNKPRLRWTPELHERFVDAVNKLEGPEKATPKGVLKLMKVEGLTIYHIKSHLQKYRLAKYLPETKEDKKQEEKKTKSVANGNDHAKKKSAQMAEALRMQMEVQKQLHEQLEVQRQLQLRIEEHARYLQKILEEQQKARESISSMTSTTEGESPEFAPMEKTEDKAETSSAPLSKCRITDTDAECHSKVDNKKTKPQADLEMVHDE</sequence>
<organism evidence="5">
    <name type="scientific">Oryza sativa subsp. indica</name>
    <name type="common">Rice</name>
    <dbReference type="NCBI Taxonomy" id="39946"/>
    <lineage>
        <taxon>Eukaryota</taxon>
        <taxon>Viridiplantae</taxon>
        <taxon>Streptophyta</taxon>
        <taxon>Embryophyta</taxon>
        <taxon>Tracheophyta</taxon>
        <taxon>Spermatophyta</taxon>
        <taxon>Magnoliopsida</taxon>
        <taxon>Liliopsida</taxon>
        <taxon>Poales</taxon>
        <taxon>Poaceae</taxon>
        <taxon>BOP clade</taxon>
        <taxon>Oryzoideae</taxon>
        <taxon>Oryzeae</taxon>
        <taxon>Oryzinae</taxon>
        <taxon>Oryza</taxon>
        <taxon>Oryza sativa</taxon>
    </lineage>
</organism>